<keyword id="KW-1003">Cell membrane</keyword>
<keyword id="KW-0169">Cobalamin biosynthesis</keyword>
<keyword id="KW-0460">Magnesium</keyword>
<keyword id="KW-0472">Membrane</keyword>
<keyword id="KW-1185">Reference proteome</keyword>
<keyword id="KW-0808">Transferase</keyword>
<keyword id="KW-0812">Transmembrane</keyword>
<keyword id="KW-1133">Transmembrane helix</keyword>
<feature type="chain" id="PRO_0000146916" description="Adenosylcobinamide-GDP ribazoletransferase">
    <location>
        <begin position="1"/>
        <end position="224"/>
    </location>
</feature>
<feature type="transmembrane region" description="Helical" evidence="1">
    <location>
        <begin position="21"/>
        <end position="41"/>
    </location>
</feature>
<feature type="transmembrane region" description="Helical" evidence="1">
    <location>
        <begin position="44"/>
        <end position="64"/>
    </location>
</feature>
<feature type="transmembrane region" description="Helical" evidence="1">
    <location>
        <begin position="97"/>
        <end position="117"/>
    </location>
</feature>
<feature type="transmembrane region" description="Helical" evidence="1">
    <location>
        <begin position="156"/>
        <end position="176"/>
    </location>
</feature>
<dbReference type="EC" id="2.7.8.26" evidence="1"/>
<dbReference type="EMBL" id="AE009441">
    <property type="protein sequence ID" value="AAL62752.1"/>
    <property type="molecule type" value="Genomic_DNA"/>
</dbReference>
<dbReference type="STRING" id="178306.PAE0379"/>
<dbReference type="EnsemblBacteria" id="AAL62752">
    <property type="protein sequence ID" value="AAL62752"/>
    <property type="gene ID" value="PAE0379"/>
</dbReference>
<dbReference type="KEGG" id="pai:PAE0379"/>
<dbReference type="PATRIC" id="fig|178306.9.peg.286"/>
<dbReference type="eggNOG" id="arCOG04338">
    <property type="taxonomic scope" value="Archaea"/>
</dbReference>
<dbReference type="HOGENOM" id="CLU_057426_2_0_2"/>
<dbReference type="InParanoid" id="Q8ZZ89"/>
<dbReference type="UniPathway" id="UPA00148">
    <property type="reaction ID" value="UER00238"/>
</dbReference>
<dbReference type="Proteomes" id="UP000002439">
    <property type="component" value="Chromosome"/>
</dbReference>
<dbReference type="GO" id="GO:0005886">
    <property type="term" value="C:plasma membrane"/>
    <property type="evidence" value="ECO:0007669"/>
    <property type="project" value="UniProtKB-SubCell"/>
</dbReference>
<dbReference type="GO" id="GO:0051073">
    <property type="term" value="F:adenosylcobinamide-GDP ribazoletransferase activity"/>
    <property type="evidence" value="ECO:0007669"/>
    <property type="project" value="UniProtKB-UniRule"/>
</dbReference>
<dbReference type="GO" id="GO:0008818">
    <property type="term" value="F:cobalamin 5'-phosphate synthase activity"/>
    <property type="evidence" value="ECO:0007669"/>
    <property type="project" value="UniProtKB-UniRule"/>
</dbReference>
<dbReference type="GO" id="GO:0009236">
    <property type="term" value="P:cobalamin biosynthetic process"/>
    <property type="evidence" value="ECO:0000318"/>
    <property type="project" value="GO_Central"/>
</dbReference>
<dbReference type="HAMAP" id="MF_00719">
    <property type="entry name" value="CobS"/>
    <property type="match status" value="1"/>
</dbReference>
<dbReference type="InterPro" id="IPR003805">
    <property type="entry name" value="CobS"/>
</dbReference>
<dbReference type="PANTHER" id="PTHR34148">
    <property type="entry name" value="ADENOSYLCOBINAMIDE-GDP RIBAZOLETRANSFERASE"/>
    <property type="match status" value="1"/>
</dbReference>
<dbReference type="PANTHER" id="PTHR34148:SF1">
    <property type="entry name" value="ADENOSYLCOBINAMIDE-GDP RIBAZOLETRANSFERASE"/>
    <property type="match status" value="1"/>
</dbReference>
<dbReference type="Pfam" id="PF02654">
    <property type="entry name" value="CobS"/>
    <property type="match status" value="1"/>
</dbReference>
<organism>
    <name type="scientific">Pyrobaculum aerophilum (strain ATCC 51768 / DSM 7523 / JCM 9630 / CIP 104966 / NBRC 100827 / IM2)</name>
    <dbReference type="NCBI Taxonomy" id="178306"/>
    <lineage>
        <taxon>Archaea</taxon>
        <taxon>Thermoproteota</taxon>
        <taxon>Thermoprotei</taxon>
        <taxon>Thermoproteales</taxon>
        <taxon>Thermoproteaceae</taxon>
        <taxon>Pyrobaculum</taxon>
    </lineage>
</organism>
<protein>
    <recommendedName>
        <fullName evidence="1">Adenosylcobinamide-GDP ribazoletransferase</fullName>
        <ecNumber evidence="1">2.7.8.26</ecNumber>
    </recommendedName>
    <alternativeName>
        <fullName evidence="1">Cobalamin synthase</fullName>
    </alternativeName>
    <alternativeName>
        <fullName evidence="1">Cobalamin-5'-phosphate synthase</fullName>
    </alternativeName>
</protein>
<proteinExistence type="inferred from homology"/>
<accession>Q8ZZ89</accession>
<sequence>MRCLKSLLAFFTAFPIGGAELSFKCVWALPYVAAPIIAAIPTTLLYLGASPAIAYIALLAATGLHHLDGLADVGDALLVRDREAARRVLEDPRRGTGGIFAVTAVVVTTAAHLHSPLQLLLGEVFSKSTALLFAGFSKSFKPGLGEAFTEAAKRQWPAALPALAVLAYLAPVTTAVSLATSALLYQLAYRHLGGANGDVYGYLLEVSRSAFVIWSAYVPVPTAF</sequence>
<name>COBS_PYRAE</name>
<comment type="function">
    <text evidence="1">Joins adenosylcobinamide-GDP and alpha-ribazole to generate adenosylcobalamin (Ado-cobalamin). Also synthesizes adenosylcobalamin 5'-phosphate from adenosylcobinamide-GDP and alpha-ribazole 5'-phosphate.</text>
</comment>
<comment type="catalytic activity">
    <reaction evidence="1">
        <text>alpha-ribazole + adenosylcob(III)inamide-GDP = adenosylcob(III)alamin + GMP + H(+)</text>
        <dbReference type="Rhea" id="RHEA:16049"/>
        <dbReference type="ChEBI" id="CHEBI:10329"/>
        <dbReference type="ChEBI" id="CHEBI:15378"/>
        <dbReference type="ChEBI" id="CHEBI:18408"/>
        <dbReference type="ChEBI" id="CHEBI:58115"/>
        <dbReference type="ChEBI" id="CHEBI:60487"/>
        <dbReference type="EC" id="2.7.8.26"/>
    </reaction>
</comment>
<comment type="catalytic activity">
    <reaction evidence="1">
        <text>alpha-ribazole 5'-phosphate + adenosylcob(III)inamide-GDP = adenosylcob(III)alamin 5'-phosphate + GMP + H(+)</text>
        <dbReference type="Rhea" id="RHEA:23560"/>
        <dbReference type="ChEBI" id="CHEBI:15378"/>
        <dbReference type="ChEBI" id="CHEBI:57918"/>
        <dbReference type="ChEBI" id="CHEBI:58115"/>
        <dbReference type="ChEBI" id="CHEBI:60487"/>
        <dbReference type="ChEBI" id="CHEBI:60493"/>
        <dbReference type="EC" id="2.7.8.26"/>
    </reaction>
</comment>
<comment type="cofactor">
    <cofactor evidence="1">
        <name>Mg(2+)</name>
        <dbReference type="ChEBI" id="CHEBI:18420"/>
    </cofactor>
</comment>
<comment type="pathway">
    <text evidence="1">Cofactor biosynthesis; adenosylcobalamin biosynthesis; adenosylcobalamin from cob(II)yrinate a,c-diamide: step 7/7.</text>
</comment>
<comment type="subcellular location">
    <subcellularLocation>
        <location evidence="1">Cell membrane</location>
        <topology evidence="1">Multi-pass membrane protein</topology>
    </subcellularLocation>
</comment>
<comment type="similarity">
    <text evidence="1">Belongs to the CobS family.</text>
</comment>
<gene>
    <name evidence="1" type="primary">cobS</name>
    <name type="ordered locus">PAE0379</name>
</gene>
<evidence type="ECO:0000255" key="1">
    <source>
        <dbReference type="HAMAP-Rule" id="MF_00719"/>
    </source>
</evidence>
<reference key="1">
    <citation type="journal article" date="2002" name="Proc. Natl. Acad. Sci. U.S.A.">
        <title>Genome sequence of the hyperthermophilic crenarchaeon Pyrobaculum aerophilum.</title>
        <authorList>
            <person name="Fitz-Gibbon S.T."/>
            <person name="Ladner H."/>
            <person name="Kim U.-J."/>
            <person name="Stetter K.O."/>
            <person name="Simon M.I."/>
            <person name="Miller J.H."/>
        </authorList>
    </citation>
    <scope>NUCLEOTIDE SEQUENCE [LARGE SCALE GENOMIC DNA]</scope>
    <source>
        <strain>ATCC 51768 / DSM 7523 / JCM 9630 / CIP 104966 / NBRC 100827 / IM2</strain>
    </source>
</reference>